<gene>
    <name evidence="1" type="primary">psaA</name>
</gene>
<keyword id="KW-0002">3D-structure</keyword>
<keyword id="KW-0004">4Fe-4S</keyword>
<keyword id="KW-0148">Chlorophyll</keyword>
<keyword id="KW-0157">Chromophore</keyword>
<keyword id="KW-0249">Electron transport</keyword>
<keyword id="KW-0408">Iron</keyword>
<keyword id="KW-0411">Iron-sulfur</keyword>
<keyword id="KW-0460">Magnesium</keyword>
<keyword id="KW-0472">Membrane</keyword>
<keyword id="KW-0479">Metal-binding</keyword>
<keyword id="KW-0560">Oxidoreductase</keyword>
<keyword id="KW-0602">Photosynthesis</keyword>
<keyword id="KW-0603">Photosystem I</keyword>
<keyword id="KW-0793">Thylakoid</keyword>
<keyword id="KW-0812">Transmembrane</keyword>
<keyword id="KW-1133">Transmembrane helix</keyword>
<keyword id="KW-0813">Transport</keyword>
<dbReference type="EC" id="1.97.1.12" evidence="1"/>
<dbReference type="EMBL" id="D10986">
    <property type="protein sequence ID" value="BAA01759.1"/>
    <property type="molecule type" value="Genomic_DNA"/>
</dbReference>
<dbReference type="PDB" id="6K33">
    <property type="method" value="EM"/>
    <property type="resolution" value="2.74 A"/>
    <property type="chains" value="aA/bA/cA=1-755"/>
</dbReference>
<dbReference type="PDBsum" id="6K33"/>
<dbReference type="EMDB" id="EMD-9908"/>
<dbReference type="SMR" id="P25936"/>
<dbReference type="GO" id="GO:0009522">
    <property type="term" value="C:photosystem I"/>
    <property type="evidence" value="ECO:0007669"/>
    <property type="project" value="UniProtKB-KW"/>
</dbReference>
<dbReference type="GO" id="GO:0031676">
    <property type="term" value="C:plasma membrane-derived thylakoid membrane"/>
    <property type="evidence" value="ECO:0007669"/>
    <property type="project" value="UniProtKB-SubCell"/>
</dbReference>
<dbReference type="GO" id="GO:0051539">
    <property type="term" value="F:4 iron, 4 sulfur cluster binding"/>
    <property type="evidence" value="ECO:0007669"/>
    <property type="project" value="UniProtKB-KW"/>
</dbReference>
<dbReference type="GO" id="GO:0016168">
    <property type="term" value="F:chlorophyll binding"/>
    <property type="evidence" value="ECO:0007669"/>
    <property type="project" value="UniProtKB-KW"/>
</dbReference>
<dbReference type="GO" id="GO:0009055">
    <property type="term" value="F:electron transfer activity"/>
    <property type="evidence" value="ECO:0007669"/>
    <property type="project" value="UniProtKB-UniRule"/>
</dbReference>
<dbReference type="GO" id="GO:0000287">
    <property type="term" value="F:magnesium ion binding"/>
    <property type="evidence" value="ECO:0007669"/>
    <property type="project" value="UniProtKB-UniRule"/>
</dbReference>
<dbReference type="GO" id="GO:0016491">
    <property type="term" value="F:oxidoreductase activity"/>
    <property type="evidence" value="ECO:0007669"/>
    <property type="project" value="UniProtKB-KW"/>
</dbReference>
<dbReference type="GO" id="GO:0015979">
    <property type="term" value="P:photosynthesis"/>
    <property type="evidence" value="ECO:0007669"/>
    <property type="project" value="UniProtKB-UniRule"/>
</dbReference>
<dbReference type="FunFam" id="1.20.1130.10:FF:000001">
    <property type="entry name" value="Photosystem I P700 chlorophyll a apoprotein A2"/>
    <property type="match status" value="1"/>
</dbReference>
<dbReference type="Gene3D" id="1.20.1130.10">
    <property type="entry name" value="Photosystem I PsaA/PsaB"/>
    <property type="match status" value="1"/>
</dbReference>
<dbReference type="HAMAP" id="MF_00458">
    <property type="entry name" value="PSI_PsaA"/>
    <property type="match status" value="1"/>
</dbReference>
<dbReference type="InterPro" id="IPR006243">
    <property type="entry name" value="PSI_PsaA"/>
</dbReference>
<dbReference type="InterPro" id="IPR001280">
    <property type="entry name" value="PSI_PsaA/B"/>
</dbReference>
<dbReference type="InterPro" id="IPR020586">
    <property type="entry name" value="PSI_PsaA/B_CS"/>
</dbReference>
<dbReference type="InterPro" id="IPR036408">
    <property type="entry name" value="PSI_PsaA/B_sf"/>
</dbReference>
<dbReference type="NCBIfam" id="TIGR01335">
    <property type="entry name" value="psaA"/>
    <property type="match status" value="1"/>
</dbReference>
<dbReference type="PANTHER" id="PTHR30128">
    <property type="entry name" value="OUTER MEMBRANE PROTEIN, OMPA-RELATED"/>
    <property type="match status" value="1"/>
</dbReference>
<dbReference type="PANTHER" id="PTHR30128:SF19">
    <property type="entry name" value="PHOTOSYSTEM I P700 CHLOROPHYLL A APOPROTEIN A1-RELATED"/>
    <property type="match status" value="1"/>
</dbReference>
<dbReference type="Pfam" id="PF00223">
    <property type="entry name" value="PsaA_PsaB"/>
    <property type="match status" value="1"/>
</dbReference>
<dbReference type="PIRSF" id="PIRSF002905">
    <property type="entry name" value="PSI_A"/>
    <property type="match status" value="1"/>
</dbReference>
<dbReference type="PRINTS" id="PR00257">
    <property type="entry name" value="PHOTSYSPSAAB"/>
</dbReference>
<dbReference type="SUPFAM" id="SSF81558">
    <property type="entry name" value="Photosystem I subunits PsaA/PsaB"/>
    <property type="match status" value="1"/>
</dbReference>
<dbReference type="PROSITE" id="PS00419">
    <property type="entry name" value="PHOTOSYSTEM_I_PSAAB"/>
    <property type="match status" value="1"/>
</dbReference>
<comment type="function">
    <text evidence="1">PsaA and PsaB bind P700, the primary electron donor of photosystem I (PSI), as well as the electron acceptors A0, A1 and FX. PSI is a plastocyanin/cytochrome c6-ferredoxin oxidoreductase, converting photonic excitation into a charge separation, which transfers an electron from the donor P700 chlorophyll pair to the spectroscopically characterized acceptors A0, A1, FX, FA and FB in turn. Oxidized P700 is reduced on the lumenal side of the thylakoid membrane by plastocyanin or cytochrome c6.</text>
</comment>
<comment type="catalytic activity">
    <reaction evidence="1">
        <text>reduced [plastocyanin] + hnu + oxidized [2Fe-2S]-[ferredoxin] = oxidized [plastocyanin] + reduced [2Fe-2S]-[ferredoxin]</text>
        <dbReference type="Rhea" id="RHEA:30407"/>
        <dbReference type="Rhea" id="RHEA-COMP:10000"/>
        <dbReference type="Rhea" id="RHEA-COMP:10001"/>
        <dbReference type="Rhea" id="RHEA-COMP:10039"/>
        <dbReference type="Rhea" id="RHEA-COMP:10040"/>
        <dbReference type="ChEBI" id="CHEBI:29036"/>
        <dbReference type="ChEBI" id="CHEBI:30212"/>
        <dbReference type="ChEBI" id="CHEBI:33737"/>
        <dbReference type="ChEBI" id="CHEBI:33738"/>
        <dbReference type="ChEBI" id="CHEBI:49552"/>
        <dbReference type="EC" id="1.97.1.12"/>
    </reaction>
</comment>
<comment type="cofactor">
    <text evidence="1">PSI electron transfer chain: 5 chlorophyll a, 1 chlorophyll a', 2 phylloquinones and 3 4Fe-4S clusters. PSI core antenna: 90 chlorophyll a, 22 carotenoids, 3 phospholipids and 1 galactolipid. P700 is a chlorophyll a/chlorophyll a' dimer, A0 is one or more chlorophyll a, A1 is one or both phylloquinones and FX is a shared 4Fe-4S iron-sulfur center.</text>
</comment>
<comment type="subunit">
    <text evidence="1">The PsaA/B heterodimer binds the P700 chlorophyll special pair and subsequent electron acceptors. PSI consists of a core antenna complex that captures photons, and an electron transfer chain that converts photonic excitation into a charge separation. The cyanobacterial PSI reaction center is composed of one copy each of PsaA,B,C,D,E,F,I,J,K,L,M and X, and forms trimeric complexes.</text>
</comment>
<comment type="subcellular location">
    <subcellularLocation>
        <location evidence="1">Cellular thylakoid membrane</location>
        <topology evidence="1">Multi-pass membrane protein</topology>
    </subcellularLocation>
</comment>
<comment type="similarity">
    <text evidence="1">Belongs to the PsaA/PsaB family.</text>
</comment>
<evidence type="ECO:0000255" key="1">
    <source>
        <dbReference type="HAMAP-Rule" id="MF_00458"/>
    </source>
</evidence>
<sequence>MTISPPEREPKVRVVVDNDPVPTSFEKWAKPGHFDRTLARGPQTTTWIWNLHALAHDFDTHTSDLEDISRKIFSAHFGHLAVVFIWLSGMYFHGAKFSNYEAWLADPTGIKPSAQVVWPIVGQGILNGDVGGGFHGIQITSGLFQLWRASGITNEFQLYCTAIGGLVMAGLMLFAGWFHYHKRAPKLEWFQNVESMLNHHLAGLLGLGSLSWAGHQIHVSLPINKLLDAGVAAKDIPLPHEFILNPSLMAELYPKVDWGFFSGVIPFFTFNWAAYSDFLTFNGGLNPVTGGLWLSDTAHHHLAIAVLFIIAGHMYRTNWGIGHSLKEILEAHKGPFTGAGHKGLYEVLTTSWHAQLAINLAMMGSLSIIVAQHMYAMPPYPYLATDYPTQLSLFTHHMWIGGFLVVGGAAHGAIFMVRDYDPAMNQNNVLDRVLRHRDAIISHLNWVCIFLGFHSFGLYVHNDTMRAFGRPQDMFSDTGIQLQPVFAQWVQNLHTLAPGGTAPNAAATASVAFGGDVVAVGGKVAMMPIVLGTADFMVHHIHAFTIHVTVLILLKGVLFARSSRLIPDKANLGFRFPCDGPGRGGTCQVSGWDHVFLGLFWMYNCISVVIFHFSWKMQSDVWGTVAPDGTVSHITGGNFAQSAITINGWLRDFLWAQASQVIGSYGSALSAYGLLFLGAHFIWAFSLMFLFSGRGYWQELIESIVWAHNKLKVAPAIQPRALSIIQGRAVGVAHYLLGGIATTWAFFLARIISVG</sequence>
<proteinExistence type="evidence at protein level"/>
<organism>
    <name type="scientific">Thermostichus vulcanus</name>
    <name type="common">Synechococcus vulcanus</name>
    <dbReference type="NCBI Taxonomy" id="32053"/>
    <lineage>
        <taxon>Bacteria</taxon>
        <taxon>Bacillati</taxon>
        <taxon>Cyanobacteriota</taxon>
        <taxon>Cyanophyceae</taxon>
        <taxon>Thermostichales</taxon>
        <taxon>Thermostichaceae</taxon>
        <taxon>Thermostichus</taxon>
    </lineage>
</organism>
<name>PSAA_THEVL</name>
<accession>P25936</accession>
<feature type="chain" id="PRO_0000088595" description="Photosystem I P700 chlorophyll a apoprotein A1">
    <location>
        <begin position="1"/>
        <end position="755"/>
    </location>
</feature>
<feature type="transmembrane region" description="Helical; Name=I" evidence="1">
    <location>
        <begin position="72"/>
        <end position="95"/>
    </location>
</feature>
<feature type="transmembrane region" description="Helical; Name=II" evidence="1">
    <location>
        <begin position="158"/>
        <end position="181"/>
    </location>
</feature>
<feature type="transmembrane region" description="Helical; Name=III" evidence="1">
    <location>
        <begin position="197"/>
        <end position="221"/>
    </location>
</feature>
<feature type="transmembrane region" description="Helical; Name=IV" evidence="1">
    <location>
        <begin position="297"/>
        <end position="315"/>
    </location>
</feature>
<feature type="transmembrane region" description="Helical; Name=V" evidence="1">
    <location>
        <begin position="352"/>
        <end position="375"/>
    </location>
</feature>
<feature type="transmembrane region" description="Helical; Name=VI" evidence="1">
    <location>
        <begin position="391"/>
        <end position="417"/>
    </location>
</feature>
<feature type="transmembrane region" description="Helical; Name=VII" evidence="1">
    <location>
        <begin position="439"/>
        <end position="461"/>
    </location>
</feature>
<feature type="transmembrane region" description="Helical; Name=VIII" evidence="1">
    <location>
        <begin position="536"/>
        <end position="554"/>
    </location>
</feature>
<feature type="transmembrane region" description="Helical; Name=IX" evidence="1">
    <location>
        <begin position="594"/>
        <end position="615"/>
    </location>
</feature>
<feature type="transmembrane region" description="Helical; Name=X" evidence="1">
    <location>
        <begin position="669"/>
        <end position="691"/>
    </location>
</feature>
<feature type="transmembrane region" description="Helical; Name=XI" evidence="1">
    <location>
        <begin position="729"/>
        <end position="749"/>
    </location>
</feature>
<feature type="binding site" evidence="1">
    <location>
        <position position="578"/>
    </location>
    <ligand>
        <name>[4Fe-4S] cluster</name>
        <dbReference type="ChEBI" id="CHEBI:49883"/>
        <note>ligand shared between dimeric partners</note>
    </ligand>
</feature>
<feature type="binding site" evidence="1">
    <location>
        <position position="587"/>
    </location>
    <ligand>
        <name>[4Fe-4S] cluster</name>
        <dbReference type="ChEBI" id="CHEBI:49883"/>
        <note>ligand shared between dimeric partners</note>
    </ligand>
</feature>
<feature type="binding site" description="axial binding residue" evidence="1">
    <location>
        <position position="680"/>
    </location>
    <ligand>
        <name>chlorophyll a'</name>
        <dbReference type="ChEBI" id="CHEBI:189419"/>
        <label>A1</label>
    </ligand>
    <ligandPart>
        <name>Mg</name>
        <dbReference type="ChEBI" id="CHEBI:25107"/>
    </ligandPart>
</feature>
<feature type="binding site" description="axial binding residue" evidence="1">
    <location>
        <position position="688"/>
    </location>
    <ligand>
        <name>chlorophyll a</name>
        <dbReference type="ChEBI" id="CHEBI:58416"/>
        <label>A3</label>
    </ligand>
    <ligandPart>
        <name>Mg</name>
        <dbReference type="ChEBI" id="CHEBI:25107"/>
    </ligandPart>
</feature>
<feature type="binding site" evidence="1">
    <location>
        <position position="696"/>
    </location>
    <ligand>
        <name>chlorophyll a</name>
        <dbReference type="ChEBI" id="CHEBI:58416"/>
        <label>A3</label>
    </ligand>
</feature>
<feature type="binding site" evidence="1">
    <location>
        <position position="697"/>
    </location>
    <ligand>
        <name>phylloquinone</name>
        <dbReference type="ChEBI" id="CHEBI:18067"/>
        <label>A</label>
    </ligand>
</feature>
<reference key="1">
    <citation type="journal article" date="1992" name="Plant Mol. Biol.">
        <title>Nucleotide sequences of the psaA and psaB genes encoding the photosystem I core proteins from the thermophilic cyanobacterium Synechococcus vulcanus.</title>
        <authorList>
            <person name="Shimizu T."/>
            <person name="Hiyama T."/>
            <person name="Ikeuchi M."/>
            <person name="Inoue Y."/>
        </authorList>
    </citation>
    <scope>NUCLEOTIDE SEQUENCE [GENOMIC DNA]</scope>
</reference>
<protein>
    <recommendedName>
        <fullName evidence="1">Photosystem I P700 chlorophyll a apoprotein A1</fullName>
        <ecNumber evidence="1">1.97.1.12</ecNumber>
    </recommendedName>
    <alternativeName>
        <fullName evidence="1">PsaA</fullName>
    </alternativeName>
</protein>